<organism>
    <name type="scientific">Methanosphaera stadtmanae (strain ATCC 43021 / DSM 3091 / JCM 11832 / MCB-3)</name>
    <dbReference type="NCBI Taxonomy" id="339860"/>
    <lineage>
        <taxon>Archaea</taxon>
        <taxon>Methanobacteriati</taxon>
        <taxon>Methanobacteriota</taxon>
        <taxon>Methanomada group</taxon>
        <taxon>Methanobacteria</taxon>
        <taxon>Methanobacteriales</taxon>
        <taxon>Methanobacteriaceae</taxon>
        <taxon>Methanosphaera</taxon>
    </lineage>
</organism>
<protein>
    <recommendedName>
        <fullName evidence="1">Histidinol-phosphate aminotransferase</fullName>
        <ecNumber evidence="1">2.6.1.9</ecNumber>
    </recommendedName>
    <alternativeName>
        <fullName evidence="1">Imidazole acetol-phosphate transaminase</fullName>
    </alternativeName>
</protein>
<name>HIS8_METST</name>
<gene>
    <name evidence="1" type="primary">hisC</name>
    <name type="ordered locus">Msp_1326</name>
</gene>
<accession>Q2NEQ0</accession>
<reference key="1">
    <citation type="journal article" date="2006" name="J. Bacteriol.">
        <title>The genome sequence of Methanosphaera stadtmanae reveals why this human intestinal archaeon is restricted to methanol and H2 for methane formation and ATP synthesis.</title>
        <authorList>
            <person name="Fricke W.F."/>
            <person name="Seedorf H."/>
            <person name="Henne A."/>
            <person name="Kruer M."/>
            <person name="Liesegang H."/>
            <person name="Hedderich R."/>
            <person name="Gottschalk G."/>
            <person name="Thauer R.K."/>
        </authorList>
    </citation>
    <scope>NUCLEOTIDE SEQUENCE [LARGE SCALE GENOMIC DNA]</scope>
    <source>
        <strain>ATCC 43021 / DSM 3091 / JCM 11832 / MCB-3</strain>
    </source>
</reference>
<comment type="catalytic activity">
    <reaction evidence="1">
        <text>L-histidinol phosphate + 2-oxoglutarate = 3-(imidazol-4-yl)-2-oxopropyl phosphate + L-glutamate</text>
        <dbReference type="Rhea" id="RHEA:23744"/>
        <dbReference type="ChEBI" id="CHEBI:16810"/>
        <dbReference type="ChEBI" id="CHEBI:29985"/>
        <dbReference type="ChEBI" id="CHEBI:57766"/>
        <dbReference type="ChEBI" id="CHEBI:57980"/>
        <dbReference type="EC" id="2.6.1.9"/>
    </reaction>
</comment>
<comment type="cofactor">
    <cofactor evidence="1">
        <name>pyridoxal 5'-phosphate</name>
        <dbReference type="ChEBI" id="CHEBI:597326"/>
    </cofactor>
</comment>
<comment type="pathway">
    <text evidence="1">Amino-acid biosynthesis; L-histidine biosynthesis; L-histidine from 5-phospho-alpha-D-ribose 1-diphosphate: step 7/9.</text>
</comment>
<comment type="similarity">
    <text evidence="1">Belongs to the class-II pyridoxal-phosphate-dependent aminotransferase family. Histidinol-phosphate aminotransferase subfamily.</text>
</comment>
<keyword id="KW-0028">Amino-acid biosynthesis</keyword>
<keyword id="KW-0032">Aminotransferase</keyword>
<keyword id="KW-0368">Histidine biosynthesis</keyword>
<keyword id="KW-0663">Pyridoxal phosphate</keyword>
<keyword id="KW-1185">Reference proteome</keyword>
<keyword id="KW-0808">Transferase</keyword>
<sequence>MVKTRAILEEYKTYVPGRSKKEIAEEYGVAEESIIKLGSNENPWGPSPKAKQAIIDSIDEINRYPESNHEYIKEQIAKYANVTKDQVIIGGDGADELFEVLAKTVIDEGDEFIVHQPTYTYYEYTFKQSNAKAVYATWNIEENKLDVDSVLNNITDKTKVIFLCTPNNPTGGLIPQEDIVRIIEATDALVVIDEAYWEFSEVNNVNLLKKYNNIFIIRTFSKVMGLAGLRIGYGLSNPDFIEKMSRIKPVFSVTVPSQKAVIATLNDEEFIKESTEKAITEREYLYESVNSIDNIHIYKSKSNYLLMDVRKTGYTAAELTSKLMSRGVIVRDCTSFVGLDEYYIRISVETHPKNEKFIEILKEIVEN</sequence>
<evidence type="ECO:0000255" key="1">
    <source>
        <dbReference type="HAMAP-Rule" id="MF_01023"/>
    </source>
</evidence>
<feature type="chain" id="PRO_0000319802" description="Histidinol-phosphate aminotransferase">
    <location>
        <begin position="1"/>
        <end position="367"/>
    </location>
</feature>
<feature type="modified residue" description="N6-(pyridoxal phosphate)lysine" evidence="1">
    <location>
        <position position="222"/>
    </location>
</feature>
<dbReference type="EC" id="2.6.1.9" evidence="1"/>
<dbReference type="EMBL" id="CP000102">
    <property type="protein sequence ID" value="ABC57703.1"/>
    <property type="molecule type" value="Genomic_DNA"/>
</dbReference>
<dbReference type="RefSeq" id="WP_011406902.1">
    <property type="nucleotide sequence ID" value="NC_007681.1"/>
</dbReference>
<dbReference type="SMR" id="Q2NEQ0"/>
<dbReference type="STRING" id="339860.Msp_1326"/>
<dbReference type="GeneID" id="41325895"/>
<dbReference type="KEGG" id="mst:Msp_1326"/>
<dbReference type="eggNOG" id="arCOG04273">
    <property type="taxonomic scope" value="Archaea"/>
</dbReference>
<dbReference type="HOGENOM" id="CLU_017584_3_3_2"/>
<dbReference type="OrthoDB" id="9929at2157"/>
<dbReference type="UniPathway" id="UPA00031">
    <property type="reaction ID" value="UER00012"/>
</dbReference>
<dbReference type="Proteomes" id="UP000001931">
    <property type="component" value="Chromosome"/>
</dbReference>
<dbReference type="GO" id="GO:0004400">
    <property type="term" value="F:histidinol-phosphate transaminase activity"/>
    <property type="evidence" value="ECO:0007669"/>
    <property type="project" value="UniProtKB-UniRule"/>
</dbReference>
<dbReference type="GO" id="GO:0030170">
    <property type="term" value="F:pyridoxal phosphate binding"/>
    <property type="evidence" value="ECO:0007669"/>
    <property type="project" value="InterPro"/>
</dbReference>
<dbReference type="GO" id="GO:0000105">
    <property type="term" value="P:L-histidine biosynthetic process"/>
    <property type="evidence" value="ECO:0007669"/>
    <property type="project" value="UniProtKB-UniRule"/>
</dbReference>
<dbReference type="CDD" id="cd00609">
    <property type="entry name" value="AAT_like"/>
    <property type="match status" value="1"/>
</dbReference>
<dbReference type="Gene3D" id="3.90.1150.10">
    <property type="entry name" value="Aspartate Aminotransferase, domain 1"/>
    <property type="match status" value="1"/>
</dbReference>
<dbReference type="Gene3D" id="3.40.640.10">
    <property type="entry name" value="Type I PLP-dependent aspartate aminotransferase-like (Major domain)"/>
    <property type="match status" value="1"/>
</dbReference>
<dbReference type="HAMAP" id="MF_01023">
    <property type="entry name" value="HisC_aminotrans_2"/>
    <property type="match status" value="1"/>
</dbReference>
<dbReference type="InterPro" id="IPR004839">
    <property type="entry name" value="Aminotransferase_I/II_large"/>
</dbReference>
<dbReference type="InterPro" id="IPR005861">
    <property type="entry name" value="HisP_aminotrans"/>
</dbReference>
<dbReference type="InterPro" id="IPR050106">
    <property type="entry name" value="HistidinolP_aminotransfase"/>
</dbReference>
<dbReference type="InterPro" id="IPR015424">
    <property type="entry name" value="PyrdxlP-dep_Trfase"/>
</dbReference>
<dbReference type="InterPro" id="IPR015421">
    <property type="entry name" value="PyrdxlP-dep_Trfase_major"/>
</dbReference>
<dbReference type="InterPro" id="IPR015422">
    <property type="entry name" value="PyrdxlP-dep_Trfase_small"/>
</dbReference>
<dbReference type="NCBIfam" id="TIGR01141">
    <property type="entry name" value="hisC"/>
    <property type="match status" value="1"/>
</dbReference>
<dbReference type="PANTHER" id="PTHR43643:SF3">
    <property type="entry name" value="HISTIDINOL-PHOSPHATE AMINOTRANSFERASE"/>
    <property type="match status" value="1"/>
</dbReference>
<dbReference type="PANTHER" id="PTHR43643">
    <property type="entry name" value="HISTIDINOL-PHOSPHATE AMINOTRANSFERASE 2"/>
    <property type="match status" value="1"/>
</dbReference>
<dbReference type="Pfam" id="PF00155">
    <property type="entry name" value="Aminotran_1_2"/>
    <property type="match status" value="1"/>
</dbReference>
<dbReference type="SUPFAM" id="SSF53383">
    <property type="entry name" value="PLP-dependent transferases"/>
    <property type="match status" value="1"/>
</dbReference>
<proteinExistence type="inferred from homology"/>